<proteinExistence type="evidence at transcript level"/>
<evidence type="ECO:0000250" key="1">
    <source>
        <dbReference type="UniProtKB" id="Q9H8P0"/>
    </source>
</evidence>
<evidence type="ECO:0000255" key="2"/>
<evidence type="ECO:0000305" key="3"/>
<organism>
    <name type="scientific">Drosophila melanogaster</name>
    <name type="common">Fruit fly</name>
    <dbReference type="NCBI Taxonomy" id="7227"/>
    <lineage>
        <taxon>Eukaryota</taxon>
        <taxon>Metazoa</taxon>
        <taxon>Ecdysozoa</taxon>
        <taxon>Arthropoda</taxon>
        <taxon>Hexapoda</taxon>
        <taxon>Insecta</taxon>
        <taxon>Pterygota</taxon>
        <taxon>Neoptera</taxon>
        <taxon>Endopterygota</taxon>
        <taxon>Diptera</taxon>
        <taxon>Brachycera</taxon>
        <taxon>Muscomorpha</taxon>
        <taxon>Ephydroidea</taxon>
        <taxon>Drosophilidae</taxon>
        <taxon>Drosophila</taxon>
        <taxon>Sophophora</taxon>
    </lineage>
</organism>
<sequence>MAPPENGILEVLENLLDRYKINLLQMMFGTFIATIVFFGGLMTFVEKYLPNSIRQSFRYGKHSFKGETDPLVAWLEVPKSWFKHFYTFALFWSWLAFYVLVSTVREQKEAPEYVLQFLDIMGGGRSHRKVEIDSTTACVGAFMLTLQCTRRFYETNFVQIFSKKSKINLSHYAVGYVHYFGAVIALLSNTSGFVRGSKPMEFSLDKLTSQQILYLGVFFLAWQQQYASNMILVNLRKDPRTGSVKTEKHLLPKGGLFNLLSSPHMFLEVVMYFCIADLYMPVRIWRLIFLWVASNQTINALLTHKWYQETFREYPKNRRAIIPFLL</sequence>
<keyword id="KW-0256">Endoplasmic reticulum</keyword>
<keyword id="KW-0472">Membrane</keyword>
<keyword id="KW-0521">NADP</keyword>
<keyword id="KW-0560">Oxidoreductase</keyword>
<keyword id="KW-1185">Reference proteome</keyword>
<keyword id="KW-0812">Transmembrane</keyword>
<keyword id="KW-1133">Transmembrane helix</keyword>
<protein>
    <recommendedName>
        <fullName evidence="3">Polyprenal reductase</fullName>
        <ecNumber evidence="1">1.3.1.94</ecNumber>
    </recommendedName>
</protein>
<feature type="chain" id="PRO_0000398654" description="Polyprenal reductase">
    <location>
        <begin position="1"/>
        <end position="326"/>
    </location>
</feature>
<feature type="transmembrane region" description="Helical" evidence="2">
    <location>
        <begin position="26"/>
        <end position="46"/>
    </location>
</feature>
<feature type="transmembrane region" description="Helical" evidence="2">
    <location>
        <begin position="84"/>
        <end position="104"/>
    </location>
</feature>
<feature type="transmembrane region" description="Helical" evidence="2">
    <location>
        <begin position="167"/>
        <end position="187"/>
    </location>
</feature>
<feature type="transmembrane region" description="Helical" evidence="2">
    <location>
        <begin position="212"/>
        <end position="232"/>
    </location>
</feature>
<feature type="transmembrane region" description="Helical" evidence="2">
    <location>
        <begin position="256"/>
        <end position="276"/>
    </location>
</feature>
<feature type="sequence variant" description="In strain: ZBMEL95 and ZBMEL157.">
    <original>L</original>
    <variation>P</variation>
    <location>
        <position position="9"/>
    </location>
</feature>
<feature type="sequence variant" description="In strain: MEL11, ZBMEL145, ZBMEL131, ZBMEL229 and ZBMEL384.">
    <original>A</original>
    <variation>V</variation>
    <location>
        <position position="96"/>
    </location>
</feature>
<feature type="sequence variant" description="In strain: MEL01, MEL02, MEL12, MEL13, MEL14, MEL15, MEL16, MEL17, MEL18, MEL19, MEL20, ZBMEL84, ZBMEL95, ZBMEL131, ZBMEL157, ZBMEL191, ZBMEL377 and ZBMEL398.">
    <original>R</original>
    <variation>H</variation>
    <location>
        <position position="125"/>
    </location>
</feature>
<feature type="sequence variant" description="In strain: ZBMEL186.">
    <original>P</original>
    <variation>R</variation>
    <location>
        <position position="239"/>
    </location>
</feature>
<name>SR5A3_DROME</name>
<reference key="1">
    <citation type="journal article" date="2006" name="Genetics">
        <title>Widespread adaptive evolution of Drosophila genes with sex-biased expression.</title>
        <authorList>
            <person name="Proeschel M."/>
            <person name="Zhang Z."/>
            <person name="Parsch J."/>
        </authorList>
    </citation>
    <scope>NUCLEOTIDE SEQUENCE [GENOMIC DNA]</scope>
    <source>
        <strain>ZBMEL131</strain>
        <strain>ZBMEL145</strain>
        <strain>ZBMEL157</strain>
        <strain>ZBMEL186</strain>
        <strain>ZBMEL191</strain>
        <strain>ZBMEL229</strain>
        <strain>ZBMEL377</strain>
        <strain>ZBMEL384</strain>
        <strain>ZBMEL398</strain>
        <strain>ZBMEL84</strain>
        <strain>ZBMEL95</strain>
    </source>
</reference>
<reference key="2">
    <citation type="journal article" date="2009" name="Mol. Biol. Evol.">
        <title>The influence of demography and weak selection on the McDonald-Kreitman test: an empirical study in Drosophila.</title>
        <authorList>
            <person name="Parsch J."/>
            <person name="Zhang Z."/>
            <person name="Baines J.F."/>
        </authorList>
    </citation>
    <scope>NUCLEOTIDE SEQUENCE [GENOMIC DNA]</scope>
    <source>
        <strain>MEL01</strain>
        <strain>MEL02</strain>
        <strain>MEL11</strain>
        <strain>MEL12</strain>
        <strain>MEL13</strain>
        <strain>MEL14</strain>
        <strain>MEL15</strain>
        <strain>MEL16</strain>
        <strain>MEL17</strain>
        <strain>MEL18</strain>
        <strain>MEL19</strain>
        <strain>MEL20</strain>
    </source>
</reference>
<reference key="3">
    <citation type="journal article" date="2000" name="Science">
        <title>The genome sequence of Drosophila melanogaster.</title>
        <authorList>
            <person name="Adams M.D."/>
            <person name="Celniker S.E."/>
            <person name="Holt R.A."/>
            <person name="Evans C.A."/>
            <person name="Gocayne J.D."/>
            <person name="Amanatides P.G."/>
            <person name="Scherer S.E."/>
            <person name="Li P.W."/>
            <person name="Hoskins R.A."/>
            <person name="Galle R.F."/>
            <person name="George R.A."/>
            <person name="Lewis S.E."/>
            <person name="Richards S."/>
            <person name="Ashburner M."/>
            <person name="Henderson S.N."/>
            <person name="Sutton G.G."/>
            <person name="Wortman J.R."/>
            <person name="Yandell M.D."/>
            <person name="Zhang Q."/>
            <person name="Chen L.X."/>
            <person name="Brandon R.C."/>
            <person name="Rogers Y.-H.C."/>
            <person name="Blazej R.G."/>
            <person name="Champe M."/>
            <person name="Pfeiffer B.D."/>
            <person name="Wan K.H."/>
            <person name="Doyle C."/>
            <person name="Baxter E.G."/>
            <person name="Helt G."/>
            <person name="Nelson C.R."/>
            <person name="Miklos G.L.G."/>
            <person name="Abril J.F."/>
            <person name="Agbayani A."/>
            <person name="An H.-J."/>
            <person name="Andrews-Pfannkoch C."/>
            <person name="Baldwin D."/>
            <person name="Ballew R.M."/>
            <person name="Basu A."/>
            <person name="Baxendale J."/>
            <person name="Bayraktaroglu L."/>
            <person name="Beasley E.M."/>
            <person name="Beeson K.Y."/>
            <person name="Benos P.V."/>
            <person name="Berman B.P."/>
            <person name="Bhandari D."/>
            <person name="Bolshakov S."/>
            <person name="Borkova D."/>
            <person name="Botchan M.R."/>
            <person name="Bouck J."/>
            <person name="Brokstein P."/>
            <person name="Brottier P."/>
            <person name="Burtis K.C."/>
            <person name="Busam D.A."/>
            <person name="Butler H."/>
            <person name="Cadieu E."/>
            <person name="Center A."/>
            <person name="Chandra I."/>
            <person name="Cherry J.M."/>
            <person name="Cawley S."/>
            <person name="Dahlke C."/>
            <person name="Davenport L.B."/>
            <person name="Davies P."/>
            <person name="de Pablos B."/>
            <person name="Delcher A."/>
            <person name="Deng Z."/>
            <person name="Mays A.D."/>
            <person name="Dew I."/>
            <person name="Dietz S.M."/>
            <person name="Dodson K."/>
            <person name="Doup L.E."/>
            <person name="Downes M."/>
            <person name="Dugan-Rocha S."/>
            <person name="Dunkov B.C."/>
            <person name="Dunn P."/>
            <person name="Durbin K.J."/>
            <person name="Evangelista C.C."/>
            <person name="Ferraz C."/>
            <person name="Ferriera S."/>
            <person name="Fleischmann W."/>
            <person name="Fosler C."/>
            <person name="Gabrielian A.E."/>
            <person name="Garg N.S."/>
            <person name="Gelbart W.M."/>
            <person name="Glasser K."/>
            <person name="Glodek A."/>
            <person name="Gong F."/>
            <person name="Gorrell J.H."/>
            <person name="Gu Z."/>
            <person name="Guan P."/>
            <person name="Harris M."/>
            <person name="Harris N.L."/>
            <person name="Harvey D.A."/>
            <person name="Heiman T.J."/>
            <person name="Hernandez J.R."/>
            <person name="Houck J."/>
            <person name="Hostin D."/>
            <person name="Houston K.A."/>
            <person name="Howland T.J."/>
            <person name="Wei M.-H."/>
            <person name="Ibegwam C."/>
            <person name="Jalali M."/>
            <person name="Kalush F."/>
            <person name="Karpen G.H."/>
            <person name="Ke Z."/>
            <person name="Kennison J.A."/>
            <person name="Ketchum K.A."/>
            <person name="Kimmel B.E."/>
            <person name="Kodira C.D."/>
            <person name="Kraft C.L."/>
            <person name="Kravitz S."/>
            <person name="Kulp D."/>
            <person name="Lai Z."/>
            <person name="Lasko P."/>
            <person name="Lei Y."/>
            <person name="Levitsky A.A."/>
            <person name="Li J.H."/>
            <person name="Li Z."/>
            <person name="Liang Y."/>
            <person name="Lin X."/>
            <person name="Liu X."/>
            <person name="Mattei B."/>
            <person name="McIntosh T.C."/>
            <person name="McLeod M.P."/>
            <person name="McPherson D."/>
            <person name="Merkulov G."/>
            <person name="Milshina N.V."/>
            <person name="Mobarry C."/>
            <person name="Morris J."/>
            <person name="Moshrefi A."/>
            <person name="Mount S.M."/>
            <person name="Moy M."/>
            <person name="Murphy B."/>
            <person name="Murphy L."/>
            <person name="Muzny D.M."/>
            <person name="Nelson D.L."/>
            <person name="Nelson D.R."/>
            <person name="Nelson K.A."/>
            <person name="Nixon K."/>
            <person name="Nusskern D.R."/>
            <person name="Pacleb J.M."/>
            <person name="Palazzolo M."/>
            <person name="Pittman G.S."/>
            <person name="Pan S."/>
            <person name="Pollard J."/>
            <person name="Puri V."/>
            <person name="Reese M.G."/>
            <person name="Reinert K."/>
            <person name="Remington K."/>
            <person name="Saunders R.D.C."/>
            <person name="Scheeler F."/>
            <person name="Shen H."/>
            <person name="Shue B.C."/>
            <person name="Siden-Kiamos I."/>
            <person name="Simpson M."/>
            <person name="Skupski M.P."/>
            <person name="Smith T.J."/>
            <person name="Spier E."/>
            <person name="Spradling A.C."/>
            <person name="Stapleton M."/>
            <person name="Strong R."/>
            <person name="Sun E."/>
            <person name="Svirskas R."/>
            <person name="Tector C."/>
            <person name="Turner R."/>
            <person name="Venter E."/>
            <person name="Wang A.H."/>
            <person name="Wang X."/>
            <person name="Wang Z.-Y."/>
            <person name="Wassarman D.A."/>
            <person name="Weinstock G.M."/>
            <person name="Weissenbach J."/>
            <person name="Williams S.M."/>
            <person name="Woodage T."/>
            <person name="Worley K.C."/>
            <person name="Wu D."/>
            <person name="Yang S."/>
            <person name="Yao Q.A."/>
            <person name="Ye J."/>
            <person name="Yeh R.-F."/>
            <person name="Zaveri J.S."/>
            <person name="Zhan M."/>
            <person name="Zhang G."/>
            <person name="Zhao Q."/>
            <person name="Zheng L."/>
            <person name="Zheng X.H."/>
            <person name="Zhong F.N."/>
            <person name="Zhong W."/>
            <person name="Zhou X."/>
            <person name="Zhu S.C."/>
            <person name="Zhu X."/>
            <person name="Smith H.O."/>
            <person name="Gibbs R.A."/>
            <person name="Myers E.W."/>
            <person name="Rubin G.M."/>
            <person name="Venter J.C."/>
        </authorList>
    </citation>
    <scope>NUCLEOTIDE SEQUENCE [LARGE SCALE GENOMIC DNA]</scope>
    <source>
        <strain>Berkeley</strain>
    </source>
</reference>
<reference key="4">
    <citation type="journal article" date="2002" name="Genome Biol.">
        <title>Annotation of the Drosophila melanogaster euchromatic genome: a systematic review.</title>
        <authorList>
            <person name="Misra S."/>
            <person name="Crosby M.A."/>
            <person name="Mungall C.J."/>
            <person name="Matthews B.B."/>
            <person name="Campbell K.S."/>
            <person name="Hradecky P."/>
            <person name="Huang Y."/>
            <person name="Kaminker J.S."/>
            <person name="Millburn G.H."/>
            <person name="Prochnik S.E."/>
            <person name="Smith C.D."/>
            <person name="Tupy J.L."/>
            <person name="Whitfield E.J."/>
            <person name="Bayraktaroglu L."/>
            <person name="Berman B.P."/>
            <person name="Bettencourt B.R."/>
            <person name="Celniker S.E."/>
            <person name="de Grey A.D.N.J."/>
            <person name="Drysdale R.A."/>
            <person name="Harris N.L."/>
            <person name="Richter J."/>
            <person name="Russo S."/>
            <person name="Schroeder A.J."/>
            <person name="Shu S.Q."/>
            <person name="Stapleton M."/>
            <person name="Yamada C."/>
            <person name="Ashburner M."/>
            <person name="Gelbart W.M."/>
            <person name="Rubin G.M."/>
            <person name="Lewis S.E."/>
        </authorList>
    </citation>
    <scope>GENOME REANNOTATION</scope>
    <source>
        <strain>Berkeley</strain>
    </source>
</reference>
<reference key="5">
    <citation type="journal article" date="2002" name="Genome Biol.">
        <title>A Drosophila full-length cDNA resource.</title>
        <authorList>
            <person name="Stapleton M."/>
            <person name="Carlson J.W."/>
            <person name="Brokstein P."/>
            <person name="Yu C."/>
            <person name="Champe M."/>
            <person name="George R.A."/>
            <person name="Guarin H."/>
            <person name="Kronmiller B."/>
            <person name="Pacleb J.M."/>
            <person name="Park S."/>
            <person name="Wan K.H."/>
            <person name="Rubin G.M."/>
            <person name="Celniker S.E."/>
        </authorList>
    </citation>
    <scope>NUCLEOTIDE SEQUENCE [LARGE SCALE MRNA]</scope>
    <source>
        <strain>Berkeley</strain>
        <tissue>Embryo</tissue>
    </source>
</reference>
<accession>Q9VLP9</accession>
<accession>A0ANR0</accession>
<accession>A0ANR1</accession>
<accession>A0ANR2</accession>
<accession>A0ANR3</accession>
<accession>A0ANR5</accession>
<accession>Q8MR21</accession>
<dbReference type="EC" id="1.3.1.94" evidence="1"/>
<dbReference type="EMBL" id="AM294298">
    <property type="protein sequence ID" value="CAL26216.1"/>
    <property type="molecule type" value="Genomic_DNA"/>
</dbReference>
<dbReference type="EMBL" id="AM294299">
    <property type="protein sequence ID" value="CAL26217.1"/>
    <property type="molecule type" value="Genomic_DNA"/>
</dbReference>
<dbReference type="EMBL" id="AM294300">
    <property type="protein sequence ID" value="CAL26218.1"/>
    <property type="molecule type" value="Genomic_DNA"/>
</dbReference>
<dbReference type="EMBL" id="AM294301">
    <property type="protein sequence ID" value="CAL26219.1"/>
    <property type="molecule type" value="Genomic_DNA"/>
</dbReference>
<dbReference type="EMBL" id="AM294302">
    <property type="protein sequence ID" value="CAL26220.1"/>
    <property type="molecule type" value="Genomic_DNA"/>
</dbReference>
<dbReference type="EMBL" id="AM294303">
    <property type="protein sequence ID" value="CAL26221.1"/>
    <property type="molecule type" value="Genomic_DNA"/>
</dbReference>
<dbReference type="EMBL" id="AM294304">
    <property type="protein sequence ID" value="CAL26230.1"/>
    <property type="molecule type" value="Genomic_DNA"/>
</dbReference>
<dbReference type="EMBL" id="AM294305">
    <property type="protein sequence ID" value="CAL26235.1"/>
    <property type="molecule type" value="Genomic_DNA"/>
</dbReference>
<dbReference type="EMBL" id="AM294306">
    <property type="protein sequence ID" value="CAL26236.1"/>
    <property type="molecule type" value="Genomic_DNA"/>
</dbReference>
<dbReference type="EMBL" id="AM294307">
    <property type="protein sequence ID" value="CAL26237.1"/>
    <property type="molecule type" value="Genomic_DNA"/>
</dbReference>
<dbReference type="EMBL" id="AM294308">
    <property type="protein sequence ID" value="CAL26238.1"/>
    <property type="molecule type" value="Genomic_DNA"/>
</dbReference>
<dbReference type="EMBL" id="FM245364">
    <property type="protein sequence ID" value="CAR93290.1"/>
    <property type="molecule type" value="Genomic_DNA"/>
</dbReference>
<dbReference type="EMBL" id="FM245365">
    <property type="protein sequence ID" value="CAR93291.1"/>
    <property type="molecule type" value="Genomic_DNA"/>
</dbReference>
<dbReference type="EMBL" id="FM245366">
    <property type="protein sequence ID" value="CAR93292.1"/>
    <property type="molecule type" value="Genomic_DNA"/>
</dbReference>
<dbReference type="EMBL" id="FM245367">
    <property type="protein sequence ID" value="CAR93293.1"/>
    <property type="molecule type" value="Genomic_DNA"/>
</dbReference>
<dbReference type="EMBL" id="FM245368">
    <property type="protein sequence ID" value="CAR93294.1"/>
    <property type="molecule type" value="Genomic_DNA"/>
</dbReference>
<dbReference type="EMBL" id="FM245369">
    <property type="protein sequence ID" value="CAR93295.1"/>
    <property type="molecule type" value="Genomic_DNA"/>
</dbReference>
<dbReference type="EMBL" id="FM245370">
    <property type="protein sequence ID" value="CAR93296.1"/>
    <property type="molecule type" value="Genomic_DNA"/>
</dbReference>
<dbReference type="EMBL" id="FM245371">
    <property type="protein sequence ID" value="CAR93297.1"/>
    <property type="molecule type" value="Genomic_DNA"/>
</dbReference>
<dbReference type="EMBL" id="FM245372">
    <property type="protein sequence ID" value="CAR93298.1"/>
    <property type="molecule type" value="Genomic_DNA"/>
</dbReference>
<dbReference type="EMBL" id="FM245373">
    <property type="protein sequence ID" value="CAR93299.1"/>
    <property type="molecule type" value="Genomic_DNA"/>
</dbReference>
<dbReference type="EMBL" id="FM245374">
    <property type="protein sequence ID" value="CAR93300.1"/>
    <property type="molecule type" value="Genomic_DNA"/>
</dbReference>
<dbReference type="EMBL" id="FM245375">
    <property type="protein sequence ID" value="CAR93301.1"/>
    <property type="molecule type" value="Genomic_DNA"/>
</dbReference>
<dbReference type="EMBL" id="AE014134">
    <property type="protein sequence ID" value="AAF52635.1"/>
    <property type="molecule type" value="Genomic_DNA"/>
</dbReference>
<dbReference type="EMBL" id="AY122175">
    <property type="protein sequence ID" value="AAM52687.1"/>
    <property type="status" value="ALT_INIT"/>
    <property type="molecule type" value="mRNA"/>
</dbReference>
<dbReference type="RefSeq" id="NP_609203.1">
    <property type="nucleotide sequence ID" value="NM_135359.3"/>
</dbReference>
<dbReference type="BioGRID" id="60262">
    <property type="interactions" value="2"/>
</dbReference>
<dbReference type="FunCoup" id="Q9VLP9">
    <property type="interactions" value="1101"/>
</dbReference>
<dbReference type="IntAct" id="Q9VLP9">
    <property type="interactions" value="2"/>
</dbReference>
<dbReference type="STRING" id="7227.FBpp0079218"/>
<dbReference type="PaxDb" id="7227-FBpp0079218"/>
<dbReference type="DNASU" id="34136"/>
<dbReference type="EnsemblMetazoa" id="FBtr0079598">
    <property type="protein sequence ID" value="FBpp0079218"/>
    <property type="gene ID" value="FBgn0032014"/>
</dbReference>
<dbReference type="GeneID" id="34136"/>
<dbReference type="KEGG" id="dme:Dmel_CG7840"/>
<dbReference type="UCSC" id="CG7840-RA">
    <property type="organism name" value="d. melanogaster"/>
</dbReference>
<dbReference type="AGR" id="FB:FBgn0032014"/>
<dbReference type="FlyBase" id="FBgn0032014">
    <property type="gene designation" value="CG7840"/>
</dbReference>
<dbReference type="VEuPathDB" id="VectorBase:FBgn0032014"/>
<dbReference type="eggNOG" id="KOG1640">
    <property type="taxonomic scope" value="Eukaryota"/>
</dbReference>
<dbReference type="GeneTree" id="ENSGT00500000044920"/>
<dbReference type="HOGENOM" id="CLU_044409_2_0_1"/>
<dbReference type="InParanoid" id="Q9VLP9"/>
<dbReference type="OMA" id="RFYETNF"/>
<dbReference type="OrthoDB" id="5788137at2759"/>
<dbReference type="PhylomeDB" id="Q9VLP9"/>
<dbReference type="Reactome" id="R-DME-193048">
    <property type="pathway name" value="Androgen biosynthesis"/>
</dbReference>
<dbReference type="Reactome" id="R-DME-446199">
    <property type="pathway name" value="Synthesis of Dolichyl-phosphate"/>
</dbReference>
<dbReference type="UniPathway" id="UPA00378"/>
<dbReference type="BioGRID-ORCS" id="34136">
    <property type="hits" value="0 hits in 3 CRISPR screens"/>
</dbReference>
<dbReference type="GenomeRNAi" id="34136"/>
<dbReference type="PRO" id="PR:Q9VLP9"/>
<dbReference type="Proteomes" id="UP000000803">
    <property type="component" value="Chromosome 2L"/>
</dbReference>
<dbReference type="Bgee" id="FBgn0032014">
    <property type="expression patterns" value="Expressed in cleaving embryo and 73 other cell types or tissues"/>
</dbReference>
<dbReference type="GO" id="GO:0005783">
    <property type="term" value="C:endoplasmic reticulum"/>
    <property type="evidence" value="ECO:0000318"/>
    <property type="project" value="GO_Central"/>
</dbReference>
<dbReference type="GO" id="GO:0005789">
    <property type="term" value="C:endoplasmic reticulum membrane"/>
    <property type="evidence" value="ECO:0007669"/>
    <property type="project" value="UniProtKB-SubCell"/>
</dbReference>
<dbReference type="GO" id="GO:0047751">
    <property type="term" value="F:3-oxo-5-alpha-steroid 4-dehydrogenase (NADP+) activity"/>
    <property type="evidence" value="ECO:0000250"/>
    <property type="project" value="FlyBase"/>
</dbReference>
<dbReference type="GO" id="GO:0160198">
    <property type="term" value="F:polyprenal reductase activity"/>
    <property type="evidence" value="ECO:0000250"/>
    <property type="project" value="UniProtKB"/>
</dbReference>
<dbReference type="GO" id="GO:0102389">
    <property type="term" value="F:polyprenol reductase activity"/>
    <property type="evidence" value="ECO:0000318"/>
    <property type="project" value="GO_Central"/>
</dbReference>
<dbReference type="GO" id="GO:0019408">
    <property type="term" value="P:dolichol biosynthetic process"/>
    <property type="evidence" value="ECO:0000250"/>
    <property type="project" value="UniProtKB"/>
</dbReference>
<dbReference type="GO" id="GO:0019348">
    <property type="term" value="P:dolichol metabolic process"/>
    <property type="evidence" value="ECO:0000250"/>
    <property type="project" value="UniProtKB"/>
</dbReference>
<dbReference type="GO" id="GO:0006488">
    <property type="term" value="P:dolichol-linked oligosaccharide biosynthetic process"/>
    <property type="evidence" value="ECO:0000250"/>
    <property type="project" value="UniProtKB"/>
</dbReference>
<dbReference type="GO" id="GO:0016095">
    <property type="term" value="P:polyprenol catabolic process"/>
    <property type="evidence" value="ECO:0000250"/>
    <property type="project" value="UniProtKB"/>
</dbReference>
<dbReference type="InterPro" id="IPR001104">
    <property type="entry name" value="3-oxo-5_a-steroid_4-DH_C"/>
</dbReference>
<dbReference type="InterPro" id="IPR039698">
    <property type="entry name" value="Dfg10/SRD5A3"/>
</dbReference>
<dbReference type="PANTHER" id="PTHR14624">
    <property type="entry name" value="DFG10 PROTEIN"/>
    <property type="match status" value="1"/>
</dbReference>
<dbReference type="PANTHER" id="PTHR14624:SF0">
    <property type="entry name" value="POLYPRENOL REDUCTASE"/>
    <property type="match status" value="1"/>
</dbReference>
<dbReference type="Pfam" id="PF02544">
    <property type="entry name" value="Steroid_dh"/>
    <property type="match status" value="1"/>
</dbReference>
<dbReference type="PROSITE" id="PS50244">
    <property type="entry name" value="S5A_REDUCTASE"/>
    <property type="match status" value="1"/>
</dbReference>
<gene>
    <name type="ORF">CG7840</name>
</gene>
<comment type="function">
    <text evidence="1">Plays a key role in early steps of protein N-linked glycosylation by being involved in the conversion of polyprenol into dolichol (By similarity). Acts as a polyprenal reductase that mediates the reduction of polyprenal into dolichal in a NADP-dependent mechanism (By similarity). Dolichols are required for the synthesis of dolichol-linked monosaccharides and the oligosaccharide precursor used for N-glycosylation (By similarity).</text>
</comment>
<comment type="catalytic activity">
    <reaction evidence="1">
        <text>a di-trans,poly-cis-dolichal + NADP(+) = a di-trans,poly-cis-polyprenal + NADPH + H(+)</text>
        <dbReference type="Rhea" id="RHEA:80727"/>
        <dbReference type="Rhea" id="RHEA-COMP:19536"/>
        <dbReference type="Rhea" id="RHEA-COMP:19537"/>
        <dbReference type="ChEBI" id="CHEBI:15378"/>
        <dbReference type="ChEBI" id="CHEBI:57783"/>
        <dbReference type="ChEBI" id="CHEBI:58349"/>
        <dbReference type="ChEBI" id="CHEBI:231623"/>
        <dbReference type="ChEBI" id="CHEBI:231637"/>
        <dbReference type="EC" id="1.3.1.94"/>
    </reaction>
    <physiologicalReaction direction="right-to-left" evidence="1">
        <dbReference type="Rhea" id="RHEA:80729"/>
    </physiologicalReaction>
</comment>
<comment type="pathway">
    <text evidence="1">Protein modification; protein glycosylation.</text>
</comment>
<comment type="subcellular location">
    <subcellularLocation>
        <location evidence="1">Endoplasmic reticulum membrane</location>
        <topology evidence="2">Multi-pass membrane protein</topology>
    </subcellularLocation>
</comment>
<comment type="similarity">
    <text evidence="3">Belongs to the steroid 5-alpha reductase family. Polyprenal reductase subfamily.</text>
</comment>
<comment type="sequence caution" evidence="3">
    <conflict type="erroneous initiation">
        <sequence resource="EMBL-CDS" id="AAM52687"/>
    </conflict>
    <text>Extended N-terminus.</text>
</comment>